<dbReference type="EMBL" id="L43967">
    <property type="protein sequence ID" value="AAC71587.1"/>
    <property type="molecule type" value="Genomic_DNA"/>
</dbReference>
<dbReference type="EMBL" id="U02206">
    <property type="protein sequence ID" value="AAD12496.1"/>
    <property type="molecule type" value="Genomic_DNA"/>
</dbReference>
<dbReference type="PIR" id="I64239">
    <property type="entry name" value="I64239"/>
</dbReference>
<dbReference type="RefSeq" id="WP_009885818.1">
    <property type="nucleotide sequence ID" value="NC_000908.2"/>
</dbReference>
<dbReference type="SMR" id="P36263"/>
<dbReference type="FunCoup" id="P36263">
    <property type="interactions" value="197"/>
</dbReference>
<dbReference type="STRING" id="243273.MG_361"/>
<dbReference type="GeneID" id="88282544"/>
<dbReference type="KEGG" id="mge:MG_361"/>
<dbReference type="eggNOG" id="COG0244">
    <property type="taxonomic scope" value="Bacteria"/>
</dbReference>
<dbReference type="HOGENOM" id="CLU_092227_1_2_14"/>
<dbReference type="InParanoid" id="P36263"/>
<dbReference type="OrthoDB" id="9808307at2"/>
<dbReference type="BioCyc" id="MGEN243273:G1GJ2-454-MONOMER"/>
<dbReference type="Proteomes" id="UP000000807">
    <property type="component" value="Chromosome"/>
</dbReference>
<dbReference type="GO" id="GO:0022625">
    <property type="term" value="C:cytosolic large ribosomal subunit"/>
    <property type="evidence" value="ECO:0000318"/>
    <property type="project" value="GO_Central"/>
</dbReference>
<dbReference type="GO" id="GO:0070180">
    <property type="term" value="F:large ribosomal subunit rRNA binding"/>
    <property type="evidence" value="ECO:0007669"/>
    <property type="project" value="UniProtKB-UniRule"/>
</dbReference>
<dbReference type="GO" id="GO:0003735">
    <property type="term" value="F:structural constituent of ribosome"/>
    <property type="evidence" value="ECO:0000318"/>
    <property type="project" value="GO_Central"/>
</dbReference>
<dbReference type="GO" id="GO:0006412">
    <property type="term" value="P:translation"/>
    <property type="evidence" value="ECO:0000318"/>
    <property type="project" value="GO_Central"/>
</dbReference>
<dbReference type="CDD" id="cd05797">
    <property type="entry name" value="Ribosomal_L10"/>
    <property type="match status" value="1"/>
</dbReference>
<dbReference type="Gene3D" id="3.30.70.1730">
    <property type="match status" value="1"/>
</dbReference>
<dbReference type="Gene3D" id="6.10.250.290">
    <property type="match status" value="1"/>
</dbReference>
<dbReference type="HAMAP" id="MF_00362">
    <property type="entry name" value="Ribosomal_uL10"/>
    <property type="match status" value="1"/>
</dbReference>
<dbReference type="InterPro" id="IPR001790">
    <property type="entry name" value="Ribosomal_uL10"/>
</dbReference>
<dbReference type="InterPro" id="IPR043141">
    <property type="entry name" value="Ribosomal_uL10-like_sf"/>
</dbReference>
<dbReference type="InterPro" id="IPR022973">
    <property type="entry name" value="Ribosomal_uL10_bac"/>
</dbReference>
<dbReference type="InterPro" id="IPR047865">
    <property type="entry name" value="Ribosomal_uL10_bac_type"/>
</dbReference>
<dbReference type="InterPro" id="IPR002363">
    <property type="entry name" value="Ribosomal_uL10_CS_bac"/>
</dbReference>
<dbReference type="NCBIfam" id="NF000955">
    <property type="entry name" value="PRK00099.1-1"/>
    <property type="match status" value="1"/>
</dbReference>
<dbReference type="PANTHER" id="PTHR11560">
    <property type="entry name" value="39S RIBOSOMAL PROTEIN L10, MITOCHONDRIAL"/>
    <property type="match status" value="1"/>
</dbReference>
<dbReference type="Pfam" id="PF00466">
    <property type="entry name" value="Ribosomal_L10"/>
    <property type="match status" value="1"/>
</dbReference>
<dbReference type="SUPFAM" id="SSF160369">
    <property type="entry name" value="Ribosomal protein L10-like"/>
    <property type="match status" value="1"/>
</dbReference>
<dbReference type="PROSITE" id="PS01109">
    <property type="entry name" value="RIBOSOMAL_L10"/>
    <property type="match status" value="1"/>
</dbReference>
<proteinExistence type="inferred from homology"/>
<name>RL10_MYCGE</name>
<organism>
    <name type="scientific">Mycoplasma genitalium (strain ATCC 33530 / DSM 19775 / NCTC 10195 / G37)</name>
    <name type="common">Mycoplasmoides genitalium</name>
    <dbReference type="NCBI Taxonomy" id="243273"/>
    <lineage>
        <taxon>Bacteria</taxon>
        <taxon>Bacillati</taxon>
        <taxon>Mycoplasmatota</taxon>
        <taxon>Mycoplasmoidales</taxon>
        <taxon>Mycoplasmoidaceae</taxon>
        <taxon>Mycoplasmoides</taxon>
    </lineage>
</organism>
<comment type="function">
    <text evidence="1">Forms part of the ribosomal stalk, playing a central role in the interaction of the ribosome with GTP-bound translation factors.</text>
</comment>
<comment type="subunit">
    <text evidence="1">Part of the ribosomal stalk of the 50S ribosomal subunit. The N-terminus interacts with L11 and the large rRNA to form the base of the stalk. The C-terminus forms an elongated spine to which L12 dimers bind in a sequential fashion forming a multimeric L10(L12)X complex (By similarity).</text>
</comment>
<comment type="similarity">
    <text evidence="2">Belongs to the universal ribosomal protein uL10 family.</text>
</comment>
<sequence length="162" mass="18261">MVDSKKNKKQQVTDFSNLLSQSKGFVIFDYSGMSAVDATLMRKKLFNKGSKIKIVKNNILRRALKTSNFEGVDESVIKGKIAVAVGINEILETLKVVDSVVKEKELMKFVCGHFDNRIFNSDDLQKIAKLPGRNELYGMFLSVLQAPLRKFLYALQAVRNAK</sequence>
<feature type="chain" id="PRO_0000154665" description="Large ribosomal subunit protein uL10">
    <location>
        <begin position="1"/>
        <end position="162"/>
    </location>
</feature>
<keyword id="KW-1185">Reference proteome</keyword>
<keyword id="KW-0687">Ribonucleoprotein</keyword>
<keyword id="KW-0689">Ribosomal protein</keyword>
<keyword id="KW-0694">RNA-binding</keyword>
<keyword id="KW-0699">rRNA-binding</keyword>
<evidence type="ECO:0000250" key="1"/>
<evidence type="ECO:0000305" key="2"/>
<reference key="1">
    <citation type="journal article" date="1995" name="Science">
        <title>The minimal gene complement of Mycoplasma genitalium.</title>
        <authorList>
            <person name="Fraser C.M."/>
            <person name="Gocayne J.D."/>
            <person name="White O."/>
            <person name="Adams M.D."/>
            <person name="Clayton R.A."/>
            <person name="Fleischmann R.D."/>
            <person name="Bult C.J."/>
            <person name="Kerlavage A.R."/>
            <person name="Sutton G.G."/>
            <person name="Kelley J.M."/>
            <person name="Fritchman J.L."/>
            <person name="Weidman J.F."/>
            <person name="Small K.V."/>
            <person name="Sandusky M."/>
            <person name="Fuhrmann J.L."/>
            <person name="Nguyen D.T."/>
            <person name="Utterback T.R."/>
            <person name="Saudek D.M."/>
            <person name="Phillips C.A."/>
            <person name="Merrick J.M."/>
            <person name="Tomb J.-F."/>
            <person name="Dougherty B.A."/>
            <person name="Bott K.F."/>
            <person name="Hu P.-C."/>
            <person name="Lucier T.S."/>
            <person name="Peterson S.N."/>
            <person name="Smith H.O."/>
            <person name="Hutchison C.A. III"/>
            <person name="Venter J.C."/>
        </authorList>
    </citation>
    <scope>NUCLEOTIDE SEQUENCE [LARGE SCALE GENOMIC DNA]</scope>
    <source>
        <strain>ATCC 33530 / DSM 19775 / NCTC 10195 / G37</strain>
    </source>
</reference>
<reference key="2">
    <citation type="journal article" date="1993" name="J. Bacteriol.">
        <title>A survey of the Mycoplasma genitalium genome by using random sequencing.</title>
        <authorList>
            <person name="Peterson S.N."/>
            <person name="Hu P.-C."/>
            <person name="Bott K.F."/>
            <person name="Hutchison C.A. III"/>
        </authorList>
    </citation>
    <scope>NUCLEOTIDE SEQUENCE [GENOMIC DNA] OF 92-162</scope>
    <source>
        <strain>ATCC 33530 / DSM 19775 / NCTC 10195 / G37</strain>
    </source>
</reference>
<gene>
    <name type="primary">rplJ</name>
    <name type="synonym">rpl10</name>
    <name type="ordered locus">MG361</name>
</gene>
<accession>P36263</accession>
<protein>
    <recommendedName>
        <fullName evidence="2">Large ribosomal subunit protein uL10</fullName>
    </recommendedName>
    <alternativeName>
        <fullName>50S ribosomal protein L10</fullName>
    </alternativeName>
</protein>